<organism>
    <name type="scientific">Acholeplasma laidlawii (strain PG-8A)</name>
    <dbReference type="NCBI Taxonomy" id="441768"/>
    <lineage>
        <taxon>Bacteria</taxon>
        <taxon>Bacillati</taxon>
        <taxon>Mycoplasmatota</taxon>
        <taxon>Mollicutes</taxon>
        <taxon>Acholeplasmatales</taxon>
        <taxon>Acholeplasmataceae</taxon>
        <taxon>Acholeplasma</taxon>
    </lineage>
</organism>
<dbReference type="EC" id="6.1.1.7" evidence="1"/>
<dbReference type="EMBL" id="CP000896">
    <property type="protein sequence ID" value="ABX81519.1"/>
    <property type="molecule type" value="Genomic_DNA"/>
</dbReference>
<dbReference type="SMR" id="A9NGN9"/>
<dbReference type="STRING" id="441768.ACL_0906"/>
<dbReference type="KEGG" id="acl:ACL_0906"/>
<dbReference type="eggNOG" id="COG0013">
    <property type="taxonomic scope" value="Bacteria"/>
</dbReference>
<dbReference type="HOGENOM" id="CLU_004485_1_1_14"/>
<dbReference type="OrthoDB" id="9803884at2"/>
<dbReference type="Proteomes" id="UP000008558">
    <property type="component" value="Chromosome"/>
</dbReference>
<dbReference type="GO" id="GO:0005829">
    <property type="term" value="C:cytosol"/>
    <property type="evidence" value="ECO:0007669"/>
    <property type="project" value="TreeGrafter"/>
</dbReference>
<dbReference type="GO" id="GO:0004813">
    <property type="term" value="F:alanine-tRNA ligase activity"/>
    <property type="evidence" value="ECO:0007669"/>
    <property type="project" value="UniProtKB-UniRule"/>
</dbReference>
<dbReference type="GO" id="GO:0002161">
    <property type="term" value="F:aminoacyl-tRNA deacylase activity"/>
    <property type="evidence" value="ECO:0007669"/>
    <property type="project" value="TreeGrafter"/>
</dbReference>
<dbReference type="GO" id="GO:0005524">
    <property type="term" value="F:ATP binding"/>
    <property type="evidence" value="ECO:0007669"/>
    <property type="project" value="UniProtKB-UniRule"/>
</dbReference>
<dbReference type="GO" id="GO:0000049">
    <property type="term" value="F:tRNA binding"/>
    <property type="evidence" value="ECO:0007669"/>
    <property type="project" value="UniProtKB-KW"/>
</dbReference>
<dbReference type="GO" id="GO:0008270">
    <property type="term" value="F:zinc ion binding"/>
    <property type="evidence" value="ECO:0007669"/>
    <property type="project" value="UniProtKB-UniRule"/>
</dbReference>
<dbReference type="GO" id="GO:0006419">
    <property type="term" value="P:alanyl-tRNA aminoacylation"/>
    <property type="evidence" value="ECO:0007669"/>
    <property type="project" value="UniProtKB-UniRule"/>
</dbReference>
<dbReference type="CDD" id="cd00673">
    <property type="entry name" value="AlaRS_core"/>
    <property type="match status" value="1"/>
</dbReference>
<dbReference type="FunFam" id="3.10.310.40:FF:000001">
    <property type="entry name" value="Alanine--tRNA ligase"/>
    <property type="match status" value="1"/>
</dbReference>
<dbReference type="FunFam" id="3.30.54.20:FF:000001">
    <property type="entry name" value="Alanine--tRNA ligase"/>
    <property type="match status" value="1"/>
</dbReference>
<dbReference type="FunFam" id="3.30.930.10:FF:000046">
    <property type="entry name" value="Alanine--tRNA ligase"/>
    <property type="match status" value="1"/>
</dbReference>
<dbReference type="FunFam" id="3.30.980.10:FF:000004">
    <property type="entry name" value="Alanine--tRNA ligase, cytoplasmic"/>
    <property type="match status" value="1"/>
</dbReference>
<dbReference type="Gene3D" id="2.40.30.130">
    <property type="match status" value="1"/>
</dbReference>
<dbReference type="Gene3D" id="3.10.310.40">
    <property type="match status" value="1"/>
</dbReference>
<dbReference type="Gene3D" id="3.30.54.20">
    <property type="match status" value="1"/>
</dbReference>
<dbReference type="Gene3D" id="3.30.930.10">
    <property type="entry name" value="Bira Bifunctional Protein, Domain 2"/>
    <property type="match status" value="1"/>
</dbReference>
<dbReference type="Gene3D" id="3.30.980.10">
    <property type="entry name" value="Threonyl-trna Synthetase, Chain A, domain 2"/>
    <property type="match status" value="1"/>
</dbReference>
<dbReference type="HAMAP" id="MF_00036_B">
    <property type="entry name" value="Ala_tRNA_synth_B"/>
    <property type="match status" value="1"/>
</dbReference>
<dbReference type="InterPro" id="IPR045864">
    <property type="entry name" value="aa-tRNA-synth_II/BPL/LPL"/>
</dbReference>
<dbReference type="InterPro" id="IPR002318">
    <property type="entry name" value="Ala-tRNA-lgiase_IIc"/>
</dbReference>
<dbReference type="InterPro" id="IPR018162">
    <property type="entry name" value="Ala-tRNA-ligase_IIc_anticod-bd"/>
</dbReference>
<dbReference type="InterPro" id="IPR018165">
    <property type="entry name" value="Ala-tRNA-synth_IIc_core"/>
</dbReference>
<dbReference type="InterPro" id="IPR018164">
    <property type="entry name" value="Ala-tRNA-synth_IIc_N"/>
</dbReference>
<dbReference type="InterPro" id="IPR050058">
    <property type="entry name" value="Ala-tRNA_ligase"/>
</dbReference>
<dbReference type="InterPro" id="IPR023033">
    <property type="entry name" value="Ala_tRNA_ligase_euk/bac"/>
</dbReference>
<dbReference type="InterPro" id="IPR003156">
    <property type="entry name" value="DHHA1_dom"/>
</dbReference>
<dbReference type="InterPro" id="IPR018163">
    <property type="entry name" value="Thr/Ala-tRNA-synth_IIc_edit"/>
</dbReference>
<dbReference type="InterPro" id="IPR009000">
    <property type="entry name" value="Transl_B-barrel_sf"/>
</dbReference>
<dbReference type="InterPro" id="IPR012947">
    <property type="entry name" value="tRNA_SAD"/>
</dbReference>
<dbReference type="NCBIfam" id="TIGR00344">
    <property type="entry name" value="alaS"/>
    <property type="match status" value="1"/>
</dbReference>
<dbReference type="PANTHER" id="PTHR11777:SF9">
    <property type="entry name" value="ALANINE--TRNA LIGASE, CYTOPLASMIC"/>
    <property type="match status" value="1"/>
</dbReference>
<dbReference type="PANTHER" id="PTHR11777">
    <property type="entry name" value="ALANYL-TRNA SYNTHETASE"/>
    <property type="match status" value="1"/>
</dbReference>
<dbReference type="Pfam" id="PF02272">
    <property type="entry name" value="DHHA1"/>
    <property type="match status" value="1"/>
</dbReference>
<dbReference type="Pfam" id="PF01411">
    <property type="entry name" value="tRNA-synt_2c"/>
    <property type="match status" value="1"/>
</dbReference>
<dbReference type="Pfam" id="PF07973">
    <property type="entry name" value="tRNA_SAD"/>
    <property type="match status" value="1"/>
</dbReference>
<dbReference type="PRINTS" id="PR00980">
    <property type="entry name" value="TRNASYNTHALA"/>
</dbReference>
<dbReference type="SMART" id="SM00863">
    <property type="entry name" value="tRNA_SAD"/>
    <property type="match status" value="1"/>
</dbReference>
<dbReference type="SUPFAM" id="SSF55681">
    <property type="entry name" value="Class II aaRS and biotin synthetases"/>
    <property type="match status" value="1"/>
</dbReference>
<dbReference type="SUPFAM" id="SSF101353">
    <property type="entry name" value="Putative anticodon-binding domain of alanyl-tRNA synthetase (AlaRS)"/>
    <property type="match status" value="1"/>
</dbReference>
<dbReference type="SUPFAM" id="SSF55186">
    <property type="entry name" value="ThrRS/AlaRS common domain"/>
    <property type="match status" value="1"/>
</dbReference>
<dbReference type="SUPFAM" id="SSF50447">
    <property type="entry name" value="Translation proteins"/>
    <property type="match status" value="1"/>
</dbReference>
<dbReference type="PROSITE" id="PS50860">
    <property type="entry name" value="AA_TRNA_LIGASE_II_ALA"/>
    <property type="match status" value="1"/>
</dbReference>
<comment type="function">
    <text evidence="1">Catalyzes the attachment of alanine to tRNA(Ala) in a two-step reaction: alanine is first activated by ATP to form Ala-AMP and then transferred to the acceptor end of tRNA(Ala). Also edits incorrectly charged Ser-tRNA(Ala) and Gly-tRNA(Ala) via its editing domain.</text>
</comment>
<comment type="catalytic activity">
    <reaction evidence="1">
        <text>tRNA(Ala) + L-alanine + ATP = L-alanyl-tRNA(Ala) + AMP + diphosphate</text>
        <dbReference type="Rhea" id="RHEA:12540"/>
        <dbReference type="Rhea" id="RHEA-COMP:9657"/>
        <dbReference type="Rhea" id="RHEA-COMP:9923"/>
        <dbReference type="ChEBI" id="CHEBI:30616"/>
        <dbReference type="ChEBI" id="CHEBI:33019"/>
        <dbReference type="ChEBI" id="CHEBI:57972"/>
        <dbReference type="ChEBI" id="CHEBI:78442"/>
        <dbReference type="ChEBI" id="CHEBI:78497"/>
        <dbReference type="ChEBI" id="CHEBI:456215"/>
        <dbReference type="EC" id="6.1.1.7"/>
    </reaction>
</comment>
<comment type="cofactor">
    <cofactor evidence="1">
        <name>Zn(2+)</name>
        <dbReference type="ChEBI" id="CHEBI:29105"/>
    </cofactor>
    <text evidence="1">Binds 1 zinc ion per subunit.</text>
</comment>
<comment type="subcellular location">
    <subcellularLocation>
        <location evidence="1">Cytoplasm</location>
    </subcellularLocation>
</comment>
<comment type="domain">
    <text evidence="1">Consists of three domains; the N-terminal catalytic domain, the editing domain and the C-terminal C-Ala domain. The editing domain removes incorrectly charged amino acids, while the C-Ala domain, along with tRNA(Ala), serves as a bridge to cooperatively bring together the editing and aminoacylation centers thus stimulating deacylation of misacylated tRNAs.</text>
</comment>
<comment type="similarity">
    <text evidence="1">Belongs to the class-II aminoacyl-tRNA synthetase family.</text>
</comment>
<feature type="chain" id="PRO_0000347467" description="Alanine--tRNA ligase">
    <location>
        <begin position="1"/>
        <end position="851"/>
    </location>
</feature>
<feature type="binding site" evidence="1">
    <location>
        <position position="535"/>
    </location>
    <ligand>
        <name>Zn(2+)</name>
        <dbReference type="ChEBI" id="CHEBI:29105"/>
    </ligand>
</feature>
<feature type="binding site" evidence="1">
    <location>
        <position position="539"/>
    </location>
    <ligand>
        <name>Zn(2+)</name>
        <dbReference type="ChEBI" id="CHEBI:29105"/>
    </ligand>
</feature>
<feature type="binding site" evidence="1">
    <location>
        <position position="637"/>
    </location>
    <ligand>
        <name>Zn(2+)</name>
        <dbReference type="ChEBI" id="CHEBI:29105"/>
    </ligand>
</feature>
<feature type="binding site" evidence="1">
    <location>
        <position position="641"/>
    </location>
    <ligand>
        <name>Zn(2+)</name>
        <dbReference type="ChEBI" id="CHEBI:29105"/>
    </ligand>
</feature>
<name>SYA_ACHLI</name>
<accession>A9NGN9</accession>
<gene>
    <name evidence="1" type="primary">alaS</name>
    <name type="ordered locus">ACL_0906</name>
</gene>
<protein>
    <recommendedName>
        <fullName evidence="1">Alanine--tRNA ligase</fullName>
        <ecNumber evidence="1">6.1.1.7</ecNumber>
    </recommendedName>
    <alternativeName>
        <fullName evidence="1">Alanyl-tRNA synthetase</fullName>
        <shortName evidence="1">AlaRS</shortName>
    </alternativeName>
</protein>
<evidence type="ECO:0000255" key="1">
    <source>
        <dbReference type="HAMAP-Rule" id="MF_00036"/>
    </source>
</evidence>
<keyword id="KW-0030">Aminoacyl-tRNA synthetase</keyword>
<keyword id="KW-0067">ATP-binding</keyword>
<keyword id="KW-0963">Cytoplasm</keyword>
<keyword id="KW-0436">Ligase</keyword>
<keyword id="KW-0479">Metal-binding</keyword>
<keyword id="KW-0547">Nucleotide-binding</keyword>
<keyword id="KW-0648">Protein biosynthesis</keyword>
<keyword id="KW-1185">Reference proteome</keyword>
<keyword id="KW-0694">RNA-binding</keyword>
<keyword id="KW-0820">tRNA-binding</keyword>
<keyword id="KW-0862">Zinc</keyword>
<reference key="1">
    <citation type="journal article" date="2011" name="J. Bacteriol.">
        <title>Complete genome and proteome of Acholeplasma laidlawii.</title>
        <authorList>
            <person name="Lazarev V.N."/>
            <person name="Levitskii S.A."/>
            <person name="Basovskii Y.I."/>
            <person name="Chukin M.M."/>
            <person name="Akopian T.A."/>
            <person name="Vereshchagin V.V."/>
            <person name="Kostrjukova E.S."/>
            <person name="Kovaleva G.Y."/>
            <person name="Kazanov M.D."/>
            <person name="Malko D.B."/>
            <person name="Vitreschak A.G."/>
            <person name="Sernova N.V."/>
            <person name="Gelfand M.S."/>
            <person name="Demina I.A."/>
            <person name="Serebryakova M.V."/>
            <person name="Galyamina M.A."/>
            <person name="Vtyurin N.N."/>
            <person name="Rogov S.I."/>
            <person name="Alexeev D.G."/>
            <person name="Ladygina V.G."/>
            <person name="Govorun V.M."/>
        </authorList>
    </citation>
    <scope>NUCLEOTIDE SEQUENCE [LARGE SCALE GENOMIC DNA]</scope>
    <source>
        <strain>PG-8A</strain>
    </source>
</reference>
<sequence length="851" mass="96289">MTSEQIRQTWLNFFKDKGHIIEPSASLIPVDDPTLLWINAGVAPLKKYFDGTETPKSKRITNIQKSIRTNDIDNVGKTARHHTFFEMMGNFSIGDYFKKEAIEFGFELLTSPKYFDIPLDKLYMTYYPTDVEAKNTWLKLGVKEDHLIPVEGNFWEIGAGPSGPDTEIFFDRGTSYDLRGPELIRDDIENERFIEIWNIVFSQYNADPKLKRSEYKELPNKNIDTGAGLERFACVLQGTKTNFETDLHYPVILKVESLSGVKYDGQMAFKVISDHIKTLVFAISDGANLSNEGRGYVLRRILRRAVKYGKSIGFDAPFLHLLVDTVVDMMSNFYTNLIETAVIVKKIILKEEEKFFSTILDGEKHLLQSIKDGKLSGEDAFKLYDTYGFPIELTIEYAEEHGITVDIKGFNEALEVQKSRSRDARKVTHSMKGQDEALLNFDVPSEFVGYDYLQTESKVIKVFDQGIVLDKTPFYANSGGQISDTGSINGLVVRDVIKLPHGQHLHLIETDAFTEGDEVLCIVNQDKRHHTMKNHTATHLLNQALKDTLGSHVKQQGSYNGDLKLTFDINHYETIKDEEILTVEKIVQQKIKEQIDVVTHVLPIDEAKKLGAAMQFGEKYGDIVRVVDVGSWSMEFCGGTHVKNTSDIKNFMITSVESIGSGTYRFEAITGQVLSQVKKIVQNLLDMIHQHIEKIKSLDENHNLKPLPELTGSYQDIINLRLYNQYISNESKVVEKQLEAKLIDQIILQADTFIPKTIEPTTYIYSDNLPQSSLKPLIDVLYDKIKADTVVLLNISEDKASYLVKSSVNEARNVINELNKVLDGRGGGKPDFAQGGTQALDKVQMFLKGKN</sequence>
<proteinExistence type="inferred from homology"/>